<organism>
    <name type="scientific">Escherichia coli O6:K15:H31 (strain 536 / UPEC)</name>
    <dbReference type="NCBI Taxonomy" id="362663"/>
    <lineage>
        <taxon>Bacteria</taxon>
        <taxon>Pseudomonadati</taxon>
        <taxon>Pseudomonadota</taxon>
        <taxon>Gammaproteobacteria</taxon>
        <taxon>Enterobacterales</taxon>
        <taxon>Enterobacteriaceae</taxon>
        <taxon>Escherichia</taxon>
    </lineage>
</organism>
<comment type="function">
    <text evidence="1">Is probably a protein kinase regulator of UbiI activity which is involved in aerobic coenzyme Q (ubiquinone) biosynthesis.</text>
</comment>
<comment type="pathway">
    <text>Cofactor biosynthesis; ubiquinone biosynthesis [regulation].</text>
</comment>
<comment type="subcellular location">
    <subcellularLocation>
        <location evidence="1">Cell inner membrane</location>
        <topology evidence="1">Multi-pass membrane protein</topology>
    </subcellularLocation>
</comment>
<comment type="similarity">
    <text evidence="1">Belongs to the ABC1 family. UbiB subfamily.</text>
</comment>
<name>UBIB_ECOL5</name>
<protein>
    <recommendedName>
        <fullName evidence="1">Probable protein kinase UbiB</fullName>
        <ecNumber evidence="1">2.7.-.-</ecNumber>
    </recommendedName>
    <alternativeName>
        <fullName evidence="1">Ubiquinone biosynthesis protein UbiB</fullName>
    </alternativeName>
</protein>
<reference key="1">
    <citation type="journal article" date="2006" name="Mol. Microbiol.">
        <title>Role of pathogenicity island-associated integrases in the genome plasticity of uropathogenic Escherichia coli strain 536.</title>
        <authorList>
            <person name="Hochhut B."/>
            <person name="Wilde C."/>
            <person name="Balling G."/>
            <person name="Middendorf B."/>
            <person name="Dobrindt U."/>
            <person name="Brzuszkiewicz E."/>
            <person name="Gottschalk G."/>
            <person name="Carniel E."/>
            <person name="Hacker J."/>
        </authorList>
    </citation>
    <scope>NUCLEOTIDE SEQUENCE [LARGE SCALE GENOMIC DNA]</scope>
    <source>
        <strain>536 / UPEC</strain>
    </source>
</reference>
<accession>Q0TAL9</accession>
<sequence length="546" mass="63217">MTPGEVRRLYFIIRTFLSYGLDELIPKMRITLPLRLWRYSLFWMPNRHKDKPLGERLRLALQELGPVWIKFGQMLSTRRDLFPPHIADQLALLQDKVAPFDGKLAKQQIEAAMGGLPVEAWFDDFEIKPLASASIAQVHTARLKSNGKEVVIKVIRPDILPVIKADLKLIYRLARWVPRLLPDGRRLRPTEVVREYEKTLIDELNLLRESANAIQLRRNFEDSPMLYIPEVYPDYCSEGMMVMERIYGIPVSDVATLEKNGTNMKLLAERGVQVFFTQVFRDSFFHADMHPGNIFVSYEHPENPKYIGIDCGIVGSLNKEDKRYLAENFIAFFNRDYRKVAELHVDSGWVPPDTNVEEFEFAIRTVCEPIFEKPLAEISFGHVLLNLFNTARRFNMEVQPQLVLLQKTLLYVEGVGRQLYPQLDLWKTAKPFLESWIKDQVGIPALVRAFKEKAPFWVEKMPELPELVYDSLRQGKYLQHSVDKIARELQSNHVRQGQSRYFLGIGATLVLSGTFLLVSRPEWGLMPGWLMAGGLIAWFVGWRKTR</sequence>
<dbReference type="EC" id="2.7.-.-" evidence="1"/>
<dbReference type="EMBL" id="CP000247">
    <property type="protein sequence ID" value="ABG72010.1"/>
    <property type="molecule type" value="Genomic_DNA"/>
</dbReference>
<dbReference type="RefSeq" id="WP_000187545.1">
    <property type="nucleotide sequence ID" value="NC_008253.1"/>
</dbReference>
<dbReference type="SMR" id="Q0TAL9"/>
<dbReference type="KEGG" id="ecp:ECP_4050"/>
<dbReference type="HOGENOM" id="CLU_006533_0_0_6"/>
<dbReference type="UniPathway" id="UPA00232"/>
<dbReference type="Proteomes" id="UP000009182">
    <property type="component" value="Chromosome"/>
</dbReference>
<dbReference type="GO" id="GO:0005886">
    <property type="term" value="C:plasma membrane"/>
    <property type="evidence" value="ECO:0007669"/>
    <property type="project" value="UniProtKB-SubCell"/>
</dbReference>
<dbReference type="GO" id="GO:0005524">
    <property type="term" value="F:ATP binding"/>
    <property type="evidence" value="ECO:0007669"/>
    <property type="project" value="UniProtKB-KW"/>
</dbReference>
<dbReference type="GO" id="GO:0004672">
    <property type="term" value="F:protein kinase activity"/>
    <property type="evidence" value="ECO:0007669"/>
    <property type="project" value="UniProtKB-UniRule"/>
</dbReference>
<dbReference type="GO" id="GO:0010795">
    <property type="term" value="P:regulation of ubiquinone biosynthetic process"/>
    <property type="evidence" value="ECO:0007669"/>
    <property type="project" value="UniProtKB-UniRule"/>
</dbReference>
<dbReference type="GO" id="GO:0006744">
    <property type="term" value="P:ubiquinone biosynthetic process"/>
    <property type="evidence" value="ECO:0007669"/>
    <property type="project" value="UniProtKB-UniPathway"/>
</dbReference>
<dbReference type="CDD" id="cd13972">
    <property type="entry name" value="UbiB"/>
    <property type="match status" value="1"/>
</dbReference>
<dbReference type="HAMAP" id="MF_00414">
    <property type="entry name" value="UbiB"/>
    <property type="match status" value="1"/>
</dbReference>
<dbReference type="InterPro" id="IPR004147">
    <property type="entry name" value="ABC1_dom"/>
</dbReference>
<dbReference type="InterPro" id="IPR011009">
    <property type="entry name" value="Kinase-like_dom_sf"/>
</dbReference>
<dbReference type="InterPro" id="IPR010232">
    <property type="entry name" value="UbiB"/>
</dbReference>
<dbReference type="InterPro" id="IPR045308">
    <property type="entry name" value="UbiB_bact"/>
</dbReference>
<dbReference type="InterPro" id="IPR050154">
    <property type="entry name" value="UbiB_kinase"/>
</dbReference>
<dbReference type="NCBIfam" id="NF003404">
    <property type="entry name" value="PRK04750.1"/>
    <property type="match status" value="1"/>
</dbReference>
<dbReference type="NCBIfam" id="TIGR01982">
    <property type="entry name" value="UbiB"/>
    <property type="match status" value="1"/>
</dbReference>
<dbReference type="PANTHER" id="PTHR10566">
    <property type="entry name" value="CHAPERONE-ACTIVITY OF BC1 COMPLEX CABC1 -RELATED"/>
    <property type="match status" value="1"/>
</dbReference>
<dbReference type="PANTHER" id="PTHR10566:SF113">
    <property type="entry name" value="PROTEIN ACTIVITY OF BC1 COMPLEX KINASE 7, CHLOROPLASTIC"/>
    <property type="match status" value="1"/>
</dbReference>
<dbReference type="Pfam" id="PF03109">
    <property type="entry name" value="ABC1"/>
    <property type="match status" value="1"/>
</dbReference>
<dbReference type="SUPFAM" id="SSF56112">
    <property type="entry name" value="Protein kinase-like (PK-like)"/>
    <property type="match status" value="1"/>
</dbReference>
<proteinExistence type="inferred from homology"/>
<feature type="chain" id="PRO_1000050040" description="Probable protein kinase UbiB">
    <location>
        <begin position="1"/>
        <end position="546"/>
    </location>
</feature>
<feature type="transmembrane region" description="Helical" evidence="1">
    <location>
        <begin position="501"/>
        <end position="521"/>
    </location>
</feature>
<feature type="transmembrane region" description="Helical" evidence="1">
    <location>
        <begin position="522"/>
        <end position="542"/>
    </location>
</feature>
<feature type="domain" description="Protein kinase" evidence="1">
    <location>
        <begin position="124"/>
        <end position="502"/>
    </location>
</feature>
<feature type="active site" description="Proton acceptor" evidence="1">
    <location>
        <position position="288"/>
    </location>
</feature>
<feature type="binding site" evidence="1">
    <location>
        <begin position="130"/>
        <end position="138"/>
    </location>
    <ligand>
        <name>ATP</name>
        <dbReference type="ChEBI" id="CHEBI:30616"/>
    </ligand>
</feature>
<feature type="binding site" evidence="1">
    <location>
        <position position="153"/>
    </location>
    <ligand>
        <name>ATP</name>
        <dbReference type="ChEBI" id="CHEBI:30616"/>
    </ligand>
</feature>
<keyword id="KW-0067">ATP-binding</keyword>
<keyword id="KW-0997">Cell inner membrane</keyword>
<keyword id="KW-1003">Cell membrane</keyword>
<keyword id="KW-0418">Kinase</keyword>
<keyword id="KW-0472">Membrane</keyword>
<keyword id="KW-0547">Nucleotide-binding</keyword>
<keyword id="KW-0808">Transferase</keyword>
<keyword id="KW-0812">Transmembrane</keyword>
<keyword id="KW-1133">Transmembrane helix</keyword>
<keyword id="KW-0831">Ubiquinone biosynthesis</keyword>
<evidence type="ECO:0000255" key="1">
    <source>
        <dbReference type="HAMAP-Rule" id="MF_00414"/>
    </source>
</evidence>
<gene>
    <name evidence="1" type="primary">ubiB</name>
    <name type="ordered locus">ECP_4050</name>
</gene>